<organism>
    <name type="scientific">Salmonella typhi</name>
    <dbReference type="NCBI Taxonomy" id="90370"/>
    <lineage>
        <taxon>Bacteria</taxon>
        <taxon>Pseudomonadati</taxon>
        <taxon>Pseudomonadota</taxon>
        <taxon>Gammaproteobacteria</taxon>
        <taxon>Enterobacterales</taxon>
        <taxon>Enterobacteriaceae</taxon>
        <taxon>Salmonella</taxon>
    </lineage>
</organism>
<keyword id="KW-0408">Iron</keyword>
<keyword id="KW-0411">Iron-sulfur</keyword>
<keyword id="KW-0479">Metal-binding</keyword>
<accession>Q8XFF3</accession>
<accession>Q7ANK3</accession>
<name>ERPA_SALTI</name>
<dbReference type="EMBL" id="AE014613">
    <property type="protein sequence ID" value="AAO67936.1"/>
    <property type="status" value="ALT_INIT"/>
    <property type="molecule type" value="Genomic_DNA"/>
</dbReference>
<dbReference type="EMBL" id="AL513382">
    <property type="protein sequence ID" value="CAD01358.1"/>
    <property type="status" value="ALT_INIT"/>
    <property type="molecule type" value="Genomic_DNA"/>
</dbReference>
<dbReference type="RefSeq" id="NP_454812.1">
    <property type="nucleotide sequence ID" value="NC_003198.1"/>
</dbReference>
<dbReference type="RefSeq" id="WP_001278668.1">
    <property type="nucleotide sequence ID" value="NZ_WSUR01000009.1"/>
</dbReference>
<dbReference type="SMR" id="Q8XFF3"/>
<dbReference type="STRING" id="220341.gene:17584260"/>
<dbReference type="GeneID" id="66754727"/>
<dbReference type="KEGG" id="stt:t0205"/>
<dbReference type="KEGG" id="sty:STY0226"/>
<dbReference type="PATRIC" id="fig|220341.7.peg.227"/>
<dbReference type="eggNOG" id="COG0316">
    <property type="taxonomic scope" value="Bacteria"/>
</dbReference>
<dbReference type="HOGENOM" id="CLU_069054_5_3_6"/>
<dbReference type="OMA" id="LYIYGMQ"/>
<dbReference type="OrthoDB" id="9801228at2"/>
<dbReference type="Proteomes" id="UP000000541">
    <property type="component" value="Chromosome"/>
</dbReference>
<dbReference type="Proteomes" id="UP000002670">
    <property type="component" value="Chromosome"/>
</dbReference>
<dbReference type="GO" id="GO:0005829">
    <property type="term" value="C:cytosol"/>
    <property type="evidence" value="ECO:0007669"/>
    <property type="project" value="TreeGrafter"/>
</dbReference>
<dbReference type="GO" id="GO:0051537">
    <property type="term" value="F:2 iron, 2 sulfur cluster binding"/>
    <property type="evidence" value="ECO:0007669"/>
    <property type="project" value="TreeGrafter"/>
</dbReference>
<dbReference type="GO" id="GO:0051539">
    <property type="term" value="F:4 iron, 4 sulfur cluster binding"/>
    <property type="evidence" value="ECO:0007669"/>
    <property type="project" value="TreeGrafter"/>
</dbReference>
<dbReference type="GO" id="GO:0005506">
    <property type="term" value="F:iron ion binding"/>
    <property type="evidence" value="ECO:0007669"/>
    <property type="project" value="UniProtKB-UniRule"/>
</dbReference>
<dbReference type="GO" id="GO:0016226">
    <property type="term" value="P:iron-sulfur cluster assembly"/>
    <property type="evidence" value="ECO:0007669"/>
    <property type="project" value="UniProtKB-UniRule"/>
</dbReference>
<dbReference type="FunFam" id="2.60.300.12:FF:000002">
    <property type="entry name" value="Iron-sulfur cluster insertion protein ErpA"/>
    <property type="match status" value="1"/>
</dbReference>
<dbReference type="Gene3D" id="2.60.300.12">
    <property type="entry name" value="HesB-like domain"/>
    <property type="match status" value="1"/>
</dbReference>
<dbReference type="HAMAP" id="MF_01380">
    <property type="entry name" value="Fe_S_insert_ErpA"/>
    <property type="match status" value="1"/>
</dbReference>
<dbReference type="InterPro" id="IPR000361">
    <property type="entry name" value="FeS_biogenesis"/>
</dbReference>
<dbReference type="InterPro" id="IPR016092">
    <property type="entry name" value="FeS_cluster_insertion"/>
</dbReference>
<dbReference type="InterPro" id="IPR017870">
    <property type="entry name" value="FeS_cluster_insertion_CS"/>
</dbReference>
<dbReference type="InterPro" id="IPR023063">
    <property type="entry name" value="FeS_cluster_insertion_RrpA"/>
</dbReference>
<dbReference type="InterPro" id="IPR035903">
    <property type="entry name" value="HesB-like_dom_sf"/>
</dbReference>
<dbReference type="NCBIfam" id="TIGR00049">
    <property type="entry name" value="iron-sulfur cluster assembly accessory protein"/>
    <property type="match status" value="1"/>
</dbReference>
<dbReference type="NCBIfam" id="NF010147">
    <property type="entry name" value="PRK13623.1"/>
    <property type="match status" value="1"/>
</dbReference>
<dbReference type="PANTHER" id="PTHR43011">
    <property type="entry name" value="IRON-SULFUR CLUSTER ASSEMBLY 2 HOMOLOG, MITOCHONDRIAL"/>
    <property type="match status" value="1"/>
</dbReference>
<dbReference type="PANTHER" id="PTHR43011:SF1">
    <property type="entry name" value="IRON-SULFUR CLUSTER ASSEMBLY 2 HOMOLOG, MITOCHONDRIAL"/>
    <property type="match status" value="1"/>
</dbReference>
<dbReference type="Pfam" id="PF01521">
    <property type="entry name" value="Fe-S_biosyn"/>
    <property type="match status" value="1"/>
</dbReference>
<dbReference type="SUPFAM" id="SSF89360">
    <property type="entry name" value="HesB-like domain"/>
    <property type="match status" value="1"/>
</dbReference>
<dbReference type="PROSITE" id="PS01152">
    <property type="entry name" value="HESB"/>
    <property type="match status" value="1"/>
</dbReference>
<feature type="chain" id="PRO_0000311545" description="Iron-sulfur cluster insertion protein ErpA">
    <location>
        <begin position="1"/>
        <end position="114"/>
    </location>
</feature>
<feature type="binding site" evidence="1">
    <location>
        <position position="42"/>
    </location>
    <ligand>
        <name>iron-sulfur cluster</name>
        <dbReference type="ChEBI" id="CHEBI:30408"/>
    </ligand>
</feature>
<feature type="binding site" evidence="1">
    <location>
        <position position="106"/>
    </location>
    <ligand>
        <name>iron-sulfur cluster</name>
        <dbReference type="ChEBI" id="CHEBI:30408"/>
    </ligand>
</feature>
<feature type="binding site" evidence="1">
    <location>
        <position position="108"/>
    </location>
    <ligand>
        <name>iron-sulfur cluster</name>
        <dbReference type="ChEBI" id="CHEBI:30408"/>
    </ligand>
</feature>
<comment type="function">
    <text evidence="1">Required for insertion of 4Fe-4S clusters for at least IspG.</text>
</comment>
<comment type="cofactor">
    <cofactor evidence="1">
        <name>iron-sulfur cluster</name>
        <dbReference type="ChEBI" id="CHEBI:30408"/>
    </cofactor>
    <text evidence="1">Binds 1 iron-sulfur cluster per subunit.</text>
</comment>
<comment type="subunit">
    <text evidence="1">Homodimer.</text>
</comment>
<comment type="similarity">
    <text evidence="1">Belongs to the HesB/IscA family.</text>
</comment>
<comment type="sequence caution" evidence="2">
    <conflict type="erroneous initiation">
        <sequence resource="EMBL-CDS" id="AAO67936"/>
    </conflict>
</comment>
<comment type="sequence caution" evidence="2">
    <conflict type="erroneous initiation">
        <sequence resource="EMBL-CDS" id="CAD01358"/>
    </conflict>
</comment>
<reference key="1">
    <citation type="journal article" date="2003" name="J. Bacteriol.">
        <title>Comparative genomics of Salmonella enterica serovar Typhi strains Ty2 and CT18.</title>
        <authorList>
            <person name="Deng W."/>
            <person name="Liou S.-R."/>
            <person name="Plunkett G. III"/>
            <person name="Mayhew G.F."/>
            <person name="Rose D.J."/>
            <person name="Burland V."/>
            <person name="Kodoyianni V."/>
            <person name="Schwartz D.C."/>
            <person name="Blattner F.R."/>
        </authorList>
    </citation>
    <scope>NUCLEOTIDE SEQUENCE [LARGE SCALE GENOMIC DNA]</scope>
    <source>
        <strain>ATCC 700931 / Ty2</strain>
    </source>
</reference>
<reference key="2">
    <citation type="journal article" date="2001" name="Nature">
        <title>Complete genome sequence of a multiple drug resistant Salmonella enterica serovar Typhi CT18.</title>
        <authorList>
            <person name="Parkhill J."/>
            <person name="Dougan G."/>
            <person name="James K.D."/>
            <person name="Thomson N.R."/>
            <person name="Pickard D."/>
            <person name="Wain J."/>
            <person name="Churcher C.M."/>
            <person name="Mungall K.L."/>
            <person name="Bentley S.D."/>
            <person name="Holden M.T.G."/>
            <person name="Sebaihia M."/>
            <person name="Baker S."/>
            <person name="Basham D."/>
            <person name="Brooks K."/>
            <person name="Chillingworth T."/>
            <person name="Connerton P."/>
            <person name="Cronin A."/>
            <person name="Davis P."/>
            <person name="Davies R.M."/>
            <person name="Dowd L."/>
            <person name="White N."/>
            <person name="Farrar J."/>
            <person name="Feltwell T."/>
            <person name="Hamlin N."/>
            <person name="Haque A."/>
            <person name="Hien T.T."/>
            <person name="Holroyd S."/>
            <person name="Jagels K."/>
            <person name="Krogh A."/>
            <person name="Larsen T.S."/>
            <person name="Leather S."/>
            <person name="Moule S."/>
            <person name="O'Gaora P."/>
            <person name="Parry C."/>
            <person name="Quail M.A."/>
            <person name="Rutherford K.M."/>
            <person name="Simmonds M."/>
            <person name="Skelton J."/>
            <person name="Stevens K."/>
            <person name="Whitehead S."/>
            <person name="Barrell B.G."/>
        </authorList>
    </citation>
    <scope>NUCLEOTIDE SEQUENCE [LARGE SCALE GENOMIC DNA]</scope>
    <source>
        <strain>CT18</strain>
    </source>
</reference>
<gene>
    <name evidence="1" type="primary">erpA</name>
    <name type="ordered locus">STY0226</name>
    <name type="ordered locus">t0205</name>
</gene>
<sequence length="114" mass="12099">MSDDVALPLQFTDAAANKVKSLIADEDNPNLKLRVYITGGGCSGFQYGFTFDDQVNEGDMTIEKQGVGLVVDPMSLQYLVGGSVDYTEGLEGSRFIVTNPNAKSTCGCGSSFSI</sequence>
<protein>
    <recommendedName>
        <fullName evidence="1">Iron-sulfur cluster insertion protein ErpA</fullName>
    </recommendedName>
</protein>
<proteinExistence type="inferred from homology"/>
<evidence type="ECO:0000255" key="1">
    <source>
        <dbReference type="HAMAP-Rule" id="MF_01380"/>
    </source>
</evidence>
<evidence type="ECO:0000305" key="2"/>